<proteinExistence type="inferred from homology"/>
<dbReference type="EMBL" id="AP006878">
    <property type="protein sequence ID" value="BAD84330.1"/>
    <property type="molecule type" value="Genomic_DNA"/>
</dbReference>
<dbReference type="RefSeq" id="WP_011249096.1">
    <property type="nucleotide sequence ID" value="NC_006624.1"/>
</dbReference>
<dbReference type="SMR" id="Q5JFH5"/>
<dbReference type="STRING" id="69014.TK0141"/>
<dbReference type="EnsemblBacteria" id="BAD84330">
    <property type="protein sequence ID" value="BAD84330"/>
    <property type="gene ID" value="TK0141"/>
</dbReference>
<dbReference type="GeneID" id="78446646"/>
<dbReference type="KEGG" id="tko:TK0141"/>
<dbReference type="PATRIC" id="fig|69014.16.peg.141"/>
<dbReference type="eggNOG" id="arCOG00497">
    <property type="taxonomic scope" value="Archaea"/>
</dbReference>
<dbReference type="HOGENOM" id="CLU_070010_4_0_2"/>
<dbReference type="InParanoid" id="Q5JFH5"/>
<dbReference type="OrthoDB" id="28313at2157"/>
<dbReference type="PhylomeDB" id="Q5JFH5"/>
<dbReference type="Proteomes" id="UP000000536">
    <property type="component" value="Chromosome"/>
</dbReference>
<dbReference type="GO" id="GO:0016787">
    <property type="term" value="F:hydrolase activity"/>
    <property type="evidence" value="ECO:0000318"/>
    <property type="project" value="GO_Central"/>
</dbReference>
<dbReference type="Gene3D" id="3.60.15.10">
    <property type="entry name" value="Ribonuclease Z/Hydroxyacylglutathione hydrolase-like"/>
    <property type="match status" value="1"/>
</dbReference>
<dbReference type="HAMAP" id="MF_00457">
    <property type="entry name" value="UPF0173"/>
    <property type="match status" value="1"/>
</dbReference>
<dbReference type="InterPro" id="IPR001279">
    <property type="entry name" value="Metallo-B-lactamas"/>
</dbReference>
<dbReference type="InterPro" id="IPR036866">
    <property type="entry name" value="RibonucZ/Hydroxyglut_hydro"/>
</dbReference>
<dbReference type="InterPro" id="IPR022877">
    <property type="entry name" value="UPF0173"/>
</dbReference>
<dbReference type="InterPro" id="IPR050114">
    <property type="entry name" value="UPF0173_UPF0282_UlaG_hydrolase"/>
</dbReference>
<dbReference type="NCBIfam" id="NF001911">
    <property type="entry name" value="PRK00685.1"/>
    <property type="match status" value="1"/>
</dbReference>
<dbReference type="PANTHER" id="PTHR43546:SF3">
    <property type="entry name" value="UPF0173 METAL-DEPENDENT HYDROLASE MJ1163"/>
    <property type="match status" value="1"/>
</dbReference>
<dbReference type="PANTHER" id="PTHR43546">
    <property type="entry name" value="UPF0173 METAL-DEPENDENT HYDROLASE MJ1163-RELATED"/>
    <property type="match status" value="1"/>
</dbReference>
<dbReference type="Pfam" id="PF13483">
    <property type="entry name" value="Lactamase_B_3"/>
    <property type="match status" value="1"/>
</dbReference>
<dbReference type="SMART" id="SM00849">
    <property type="entry name" value="Lactamase_B"/>
    <property type="match status" value="1"/>
</dbReference>
<dbReference type="SUPFAM" id="SSF56281">
    <property type="entry name" value="Metallo-hydrolase/oxidoreductase"/>
    <property type="match status" value="1"/>
</dbReference>
<organism>
    <name type="scientific">Thermococcus kodakarensis (strain ATCC BAA-918 / JCM 12380 / KOD1)</name>
    <name type="common">Pyrococcus kodakaraensis (strain KOD1)</name>
    <dbReference type="NCBI Taxonomy" id="69014"/>
    <lineage>
        <taxon>Archaea</taxon>
        <taxon>Methanobacteriati</taxon>
        <taxon>Methanobacteriota</taxon>
        <taxon>Thermococci</taxon>
        <taxon>Thermococcales</taxon>
        <taxon>Thermococcaceae</taxon>
        <taxon>Thermococcus</taxon>
    </lineage>
</organism>
<feature type="chain" id="PRO_0000156404" description="UPF0173 metal-dependent hydrolase TK0141">
    <location>
        <begin position="1"/>
        <end position="224"/>
    </location>
</feature>
<comment type="similarity">
    <text evidence="1">Belongs to the UPF0173 family.</text>
</comment>
<keyword id="KW-0378">Hydrolase</keyword>
<keyword id="KW-1185">Reference proteome</keyword>
<name>Y141_THEKO</name>
<accession>Q5JFH5</accession>
<reference key="1">
    <citation type="journal article" date="2005" name="Genome Res.">
        <title>Complete genome sequence of the hyperthermophilic archaeon Thermococcus kodakaraensis KOD1 and comparison with Pyrococcus genomes.</title>
        <authorList>
            <person name="Fukui T."/>
            <person name="Atomi H."/>
            <person name="Kanai T."/>
            <person name="Matsumi R."/>
            <person name="Fujiwara S."/>
            <person name="Imanaka T."/>
        </authorList>
    </citation>
    <scope>NUCLEOTIDE SEQUENCE [LARGE SCALE GENOMIC DNA]</scope>
    <source>
        <strain>ATCC BAA-918 / JCM 12380 / KOD1</strain>
    </source>
</reference>
<sequence length="224" mass="24338">MVKVKFLGHAAFLIEGSKKILIDPFLSGNPKAAVKPEEVEADLILVTHAHGDHIGDAIEIARRSGAKIVAMYDIANYISQKASDVETIGMNYGPTTIDGVFIVQVPAWHSSSDGVHNIGNPCGYIVKLDGVTIYHAGDTFVFGDMALFNELYGPIDVALLPIGGHFTMGPREAAKAVELLKPRKVVPMHYNTWPPIAQDPEEFKRLVGDKAEVVILQPGEELEL</sequence>
<protein>
    <recommendedName>
        <fullName evidence="1">UPF0173 metal-dependent hydrolase TK0141</fullName>
    </recommendedName>
</protein>
<evidence type="ECO:0000255" key="1">
    <source>
        <dbReference type="HAMAP-Rule" id="MF_00457"/>
    </source>
</evidence>
<gene>
    <name type="ordered locus">TK0141</name>
</gene>